<gene>
    <name type="primary">pyrR</name>
</gene>
<comment type="function">
    <text evidence="2">Regulates transcriptional attenuation of the pyrimidine nucleotide (pyr) operon by binding in a uridine-dependent manner to specific sites on pyr mRNA. This disrupts an antiterminator hairpin in the RNA and favors formation of a downstream transcription terminator, leading to a reduced expression of downstream genes (Probable).</text>
</comment>
<comment type="function">
    <text>Also displays a weak uracil phosphoribosyltransferase activity which is not physiologically significant.</text>
</comment>
<comment type="catalytic activity">
    <reaction>
        <text>UMP + diphosphate = 5-phospho-alpha-D-ribose 1-diphosphate + uracil</text>
        <dbReference type="Rhea" id="RHEA:13017"/>
        <dbReference type="ChEBI" id="CHEBI:17568"/>
        <dbReference type="ChEBI" id="CHEBI:33019"/>
        <dbReference type="ChEBI" id="CHEBI:57865"/>
        <dbReference type="ChEBI" id="CHEBI:58017"/>
        <dbReference type="EC" id="2.4.2.9"/>
    </reaction>
</comment>
<comment type="subunit">
    <text evidence="1">Homodimer and homohexamer; in equilibrium.</text>
</comment>
<comment type="similarity">
    <text evidence="2">Belongs to the purine/pyrimidine phosphoribosyltransferase family. PyrR subfamily.</text>
</comment>
<protein>
    <recommendedName>
        <fullName>Bifunctional protein PyrR</fullName>
    </recommendedName>
    <domain>
        <recommendedName>
            <fullName>Pyrimidine operon regulatory protein</fullName>
        </recommendedName>
    </domain>
    <domain>
        <recommendedName>
            <fullName>Uracil phosphoribosyltransferase</fullName>
            <shortName>UPRTase</shortName>
            <ecNumber>2.4.2.9</ecNumber>
        </recommendedName>
    </domain>
</protein>
<accession>P41007</accession>
<proteinExistence type="evidence at protein level"/>
<dbReference type="EC" id="2.4.2.9"/>
<dbReference type="EMBL" id="X76083">
    <property type="protein sequence ID" value="CAA53696.1"/>
    <property type="molecule type" value="Genomic_DNA"/>
</dbReference>
<dbReference type="PIR" id="S38892">
    <property type="entry name" value="S38892"/>
</dbReference>
<dbReference type="RefSeq" id="WP_011230647.1">
    <property type="nucleotide sequence ID" value="NZ_CP025074.1"/>
</dbReference>
<dbReference type="PDB" id="1NON">
    <property type="method" value="X-ray"/>
    <property type="resolution" value="2.40 A"/>
    <property type="chains" value="A/B/C/D=1-179"/>
</dbReference>
<dbReference type="PDB" id="1XZ8">
    <property type="method" value="X-ray"/>
    <property type="resolution" value="2.80 A"/>
    <property type="chains" value="A/B=1-179"/>
</dbReference>
<dbReference type="PDB" id="1XZN">
    <property type="method" value="X-ray"/>
    <property type="resolution" value="2.27 A"/>
    <property type="chains" value="A/B=1-179"/>
</dbReference>
<dbReference type="PDB" id="2IGB">
    <property type="method" value="X-ray"/>
    <property type="resolution" value="1.68 A"/>
    <property type="chains" value="A/B=1-179"/>
</dbReference>
<dbReference type="PDBsum" id="1NON"/>
<dbReference type="PDBsum" id="1XZ8"/>
<dbReference type="PDBsum" id="1XZN"/>
<dbReference type="PDBsum" id="2IGB"/>
<dbReference type="SMR" id="P41007"/>
<dbReference type="DrugBank" id="DB03315">
    <property type="generic name" value="Guanosine 3'-monophosphate"/>
</dbReference>
<dbReference type="DrugBank" id="DB01972">
    <property type="generic name" value="Guanosine-5'-Monophosphate"/>
</dbReference>
<dbReference type="DrugBank" id="DB03685">
    <property type="generic name" value="Uridine monophosphate"/>
</dbReference>
<dbReference type="MoonProt" id="P41007"/>
<dbReference type="GeneID" id="32063043"/>
<dbReference type="EvolutionaryTrace" id="P41007"/>
<dbReference type="GO" id="GO:0003723">
    <property type="term" value="F:RNA binding"/>
    <property type="evidence" value="ECO:0007669"/>
    <property type="project" value="UniProtKB-UniRule"/>
</dbReference>
<dbReference type="GO" id="GO:0004845">
    <property type="term" value="F:uracil phosphoribosyltransferase activity"/>
    <property type="evidence" value="ECO:0007669"/>
    <property type="project" value="UniProtKB-UniRule"/>
</dbReference>
<dbReference type="GO" id="GO:0006353">
    <property type="term" value="P:DNA-templated transcription termination"/>
    <property type="evidence" value="ECO:0007669"/>
    <property type="project" value="UniProtKB-UniRule"/>
</dbReference>
<dbReference type="CDD" id="cd06223">
    <property type="entry name" value="PRTases_typeI"/>
    <property type="match status" value="1"/>
</dbReference>
<dbReference type="FunFam" id="3.40.50.2020:FF:000020">
    <property type="entry name" value="Bifunctional protein PyrR"/>
    <property type="match status" value="1"/>
</dbReference>
<dbReference type="Gene3D" id="3.40.50.2020">
    <property type="match status" value="1"/>
</dbReference>
<dbReference type="HAMAP" id="MF_01219">
    <property type="entry name" value="PyrR"/>
    <property type="match status" value="1"/>
</dbReference>
<dbReference type="InterPro" id="IPR000836">
    <property type="entry name" value="PRibTrfase_dom"/>
</dbReference>
<dbReference type="InterPro" id="IPR029057">
    <property type="entry name" value="PRTase-like"/>
</dbReference>
<dbReference type="InterPro" id="IPR023050">
    <property type="entry name" value="PyrR"/>
</dbReference>
<dbReference type="InterPro" id="IPR050137">
    <property type="entry name" value="PyrR_bifunctional"/>
</dbReference>
<dbReference type="NCBIfam" id="NF003545">
    <property type="entry name" value="PRK05205.1-1"/>
    <property type="match status" value="1"/>
</dbReference>
<dbReference type="NCBIfam" id="NF003547">
    <property type="entry name" value="PRK05205.1-3"/>
    <property type="match status" value="1"/>
</dbReference>
<dbReference type="NCBIfam" id="NF003548">
    <property type="entry name" value="PRK05205.1-4"/>
    <property type="match status" value="1"/>
</dbReference>
<dbReference type="NCBIfam" id="NF003549">
    <property type="entry name" value="PRK05205.1-5"/>
    <property type="match status" value="1"/>
</dbReference>
<dbReference type="PANTHER" id="PTHR11608">
    <property type="entry name" value="BIFUNCTIONAL PROTEIN PYRR"/>
    <property type="match status" value="1"/>
</dbReference>
<dbReference type="PANTHER" id="PTHR11608:SF0">
    <property type="entry name" value="BIFUNCTIONAL PROTEIN PYRR"/>
    <property type="match status" value="1"/>
</dbReference>
<dbReference type="Pfam" id="PF00156">
    <property type="entry name" value="Pribosyltran"/>
    <property type="match status" value="1"/>
</dbReference>
<dbReference type="SUPFAM" id="SSF53271">
    <property type="entry name" value="PRTase-like"/>
    <property type="match status" value="1"/>
</dbReference>
<sequence>MQKAVVMDEQAIRRALTRIAHEIIERNKGIDGCVLVGIKTRGIYLARRLAERIEQIEGASVPVGELDITLYRDDLTVKTDDHEPLVKGTNVPFPVTERNVILVDDVLFTGRTVRAAMDAVMDLGRPARIQLAVLVDRGHRELPIRADFVGKNVPTSRSELIVVELSEVDGIDQVSIHEK</sequence>
<evidence type="ECO:0000250" key="1"/>
<evidence type="ECO:0000305" key="2"/>
<evidence type="ECO:0007829" key="3">
    <source>
        <dbReference type="PDB" id="2IGB"/>
    </source>
</evidence>
<name>PYRR_BACCL</name>
<keyword id="KW-0002">3D-structure</keyword>
<keyword id="KW-0328">Glycosyltransferase</keyword>
<keyword id="KW-0694">RNA-binding</keyword>
<keyword id="KW-0804">Transcription</keyword>
<keyword id="KW-0805">Transcription regulation</keyword>
<keyword id="KW-0806">Transcription termination</keyword>
<keyword id="KW-0808">Transferase</keyword>
<reference key="1">
    <citation type="journal article" date="1994" name="J. Bacteriol.">
        <title>The pyrimidine biosynthesis operon of the thermophile Bacillus caldolyticus includes genes for uracil phosphoribosyltransferase and uracil permease.</title>
        <authorList>
            <person name="Ghim S.Y."/>
            <person name="Neuhard J."/>
        </authorList>
    </citation>
    <scope>NUCLEOTIDE SEQUENCE [GENOMIC DNA]</scope>
    <source>
        <strain>DSM 405 / NBRC 15313 / YP-T</strain>
    </source>
</reference>
<feature type="chain" id="PRO_0000183028" description="Bifunctional protein PyrR">
    <location>
        <begin position="1"/>
        <end position="179"/>
    </location>
</feature>
<feature type="short sequence motif" description="PRPP-binding" evidence="1">
    <location>
        <begin position="100"/>
        <end position="112"/>
    </location>
</feature>
<feature type="binding site" evidence="1">
    <location>
        <begin position="40"/>
        <end position="41"/>
    </location>
    <ligand>
        <name>substrate</name>
    </ligand>
</feature>
<feature type="binding site" evidence="1">
    <location>
        <begin position="104"/>
        <end position="112"/>
    </location>
    <ligand>
        <name>substrate</name>
    </ligand>
</feature>
<feature type="binding site" evidence="1">
    <location>
        <position position="137"/>
    </location>
    <ligand>
        <name>substrate</name>
    </ligand>
</feature>
<feature type="strand" evidence="3">
    <location>
        <begin position="2"/>
        <end position="7"/>
    </location>
</feature>
<feature type="helix" evidence="3">
    <location>
        <begin position="9"/>
        <end position="27"/>
    </location>
</feature>
<feature type="strand" evidence="3">
    <location>
        <begin position="33"/>
        <end position="38"/>
    </location>
</feature>
<feature type="helix" evidence="3">
    <location>
        <begin position="39"/>
        <end position="57"/>
    </location>
</feature>
<feature type="strand" evidence="3">
    <location>
        <begin position="63"/>
        <end position="72"/>
    </location>
</feature>
<feature type="strand" evidence="3">
    <location>
        <begin position="82"/>
        <end position="90"/>
    </location>
</feature>
<feature type="strand" evidence="3">
    <location>
        <begin position="98"/>
        <end position="110"/>
    </location>
</feature>
<feature type="helix" evidence="3">
    <location>
        <begin position="111"/>
        <end position="121"/>
    </location>
</feature>
<feature type="strand" evidence="3">
    <location>
        <begin position="127"/>
        <end position="136"/>
    </location>
</feature>
<feature type="strand" evidence="3">
    <location>
        <begin position="141"/>
        <end position="143"/>
    </location>
</feature>
<feature type="strand" evidence="3">
    <location>
        <begin position="147"/>
        <end position="152"/>
    </location>
</feature>
<feature type="strand" evidence="3">
    <location>
        <begin position="159"/>
        <end position="164"/>
    </location>
</feature>
<feature type="helix" evidence="3">
    <location>
        <begin position="166"/>
        <end position="169"/>
    </location>
</feature>
<feature type="strand" evidence="3">
    <location>
        <begin position="173"/>
        <end position="178"/>
    </location>
</feature>
<organism>
    <name type="scientific">Bacillus caldolyticus</name>
    <dbReference type="NCBI Taxonomy" id="1394"/>
    <lineage>
        <taxon>Bacteria</taxon>
        <taxon>Bacillati</taxon>
        <taxon>Bacillota</taxon>
        <taxon>Bacilli</taxon>
        <taxon>Bacillales</taxon>
        <taxon>Anoxybacillaceae</taxon>
        <taxon>Geobacillus</taxon>
        <taxon>Geobacillus thermoleovorans group</taxon>
    </lineage>
</organism>